<comment type="function">
    <text evidence="1">Catalyzes the transfer of a dimethylallyl group onto the adenine at position 37 in tRNAs that read codons beginning with uridine, leading to the formation of N6-(dimethylallyl)adenosine (i(6)A).</text>
</comment>
<comment type="catalytic activity">
    <reaction evidence="1">
        <text>adenosine(37) in tRNA + dimethylallyl diphosphate = N(6)-dimethylallyladenosine(37) in tRNA + diphosphate</text>
        <dbReference type="Rhea" id="RHEA:26482"/>
        <dbReference type="Rhea" id="RHEA-COMP:10162"/>
        <dbReference type="Rhea" id="RHEA-COMP:10375"/>
        <dbReference type="ChEBI" id="CHEBI:33019"/>
        <dbReference type="ChEBI" id="CHEBI:57623"/>
        <dbReference type="ChEBI" id="CHEBI:74411"/>
        <dbReference type="ChEBI" id="CHEBI:74415"/>
        <dbReference type="EC" id="2.5.1.75"/>
    </reaction>
</comment>
<comment type="cofactor">
    <cofactor evidence="1">
        <name>Mg(2+)</name>
        <dbReference type="ChEBI" id="CHEBI:18420"/>
    </cofactor>
</comment>
<comment type="subunit">
    <text evidence="1">Monomer.</text>
</comment>
<comment type="similarity">
    <text evidence="1">Belongs to the IPP transferase family.</text>
</comment>
<keyword id="KW-0067">ATP-binding</keyword>
<keyword id="KW-0460">Magnesium</keyword>
<keyword id="KW-0547">Nucleotide-binding</keyword>
<keyword id="KW-0808">Transferase</keyword>
<keyword id="KW-0819">tRNA processing</keyword>
<name>MIAA_RALPJ</name>
<proteinExistence type="inferred from homology"/>
<accession>B2UBL0</accession>
<reference key="1">
    <citation type="submission" date="2008-05" db="EMBL/GenBank/DDBJ databases">
        <title>Complete sequence of chromosome 1 of Ralstonia pickettii 12J.</title>
        <authorList>
            <person name="Lucas S."/>
            <person name="Copeland A."/>
            <person name="Lapidus A."/>
            <person name="Glavina del Rio T."/>
            <person name="Dalin E."/>
            <person name="Tice H."/>
            <person name="Bruce D."/>
            <person name="Goodwin L."/>
            <person name="Pitluck S."/>
            <person name="Meincke L."/>
            <person name="Brettin T."/>
            <person name="Detter J.C."/>
            <person name="Han C."/>
            <person name="Kuske C.R."/>
            <person name="Schmutz J."/>
            <person name="Larimer F."/>
            <person name="Land M."/>
            <person name="Hauser L."/>
            <person name="Kyrpides N."/>
            <person name="Mikhailova N."/>
            <person name="Marsh T."/>
            <person name="Richardson P."/>
        </authorList>
    </citation>
    <scope>NUCLEOTIDE SEQUENCE [LARGE SCALE GENOMIC DNA]</scope>
    <source>
        <strain>12J</strain>
    </source>
</reference>
<sequence>MIASAASAPRAICLLGPTASGKTAAALKLAERWPVEIISMDSALVYRGMDIGTAKPSAEEQAIAPHHLIDIIDPLDAYSAAQFANDANALIDAIRARGKLPLIVGGTMLYYKALTQGLSDLPGADPAIRAEIDAEAARDGWPALHAKLALVDPVTAARLHTTDAQRIQRALELYRLTGQPMSALLAREVGANAFQQHDAAAPYLTIALEPSDRLVLHARIAQRFDAMLAGGLLDEVEGLRRRGDLSPTLPSIRCVGYRQAWAYLEGEIDMAALREQGIAATRQLCKRQITWLRSTPERHVVDCLAPDYVDQVARLVQTSLESQSQ</sequence>
<evidence type="ECO:0000255" key="1">
    <source>
        <dbReference type="HAMAP-Rule" id="MF_00185"/>
    </source>
</evidence>
<feature type="chain" id="PRO_1000098680" description="tRNA dimethylallyltransferase">
    <location>
        <begin position="1"/>
        <end position="325"/>
    </location>
</feature>
<feature type="region of interest" description="Interaction with substrate tRNA" evidence="1">
    <location>
        <begin position="41"/>
        <end position="44"/>
    </location>
</feature>
<feature type="region of interest" description="Interaction with substrate tRNA" evidence="1">
    <location>
        <begin position="165"/>
        <end position="169"/>
    </location>
</feature>
<feature type="region of interest" description="Interaction with substrate tRNA" evidence="1">
    <location>
        <begin position="253"/>
        <end position="258"/>
    </location>
</feature>
<feature type="region of interest" description="Interaction with substrate tRNA" evidence="1">
    <location>
        <begin position="286"/>
        <end position="293"/>
    </location>
</feature>
<feature type="binding site" evidence="1">
    <location>
        <begin position="16"/>
        <end position="23"/>
    </location>
    <ligand>
        <name>ATP</name>
        <dbReference type="ChEBI" id="CHEBI:30616"/>
    </ligand>
</feature>
<feature type="binding site" evidence="1">
    <location>
        <begin position="18"/>
        <end position="23"/>
    </location>
    <ligand>
        <name>substrate</name>
    </ligand>
</feature>
<feature type="site" description="Interaction with substrate tRNA" evidence="1">
    <location>
        <position position="107"/>
    </location>
</feature>
<feature type="site" description="Interaction with substrate tRNA" evidence="1">
    <location>
        <position position="129"/>
    </location>
</feature>
<gene>
    <name evidence="1" type="primary">miaA</name>
    <name type="ordered locus">Rpic_2837</name>
</gene>
<protein>
    <recommendedName>
        <fullName evidence="1">tRNA dimethylallyltransferase</fullName>
        <ecNumber evidence="1">2.5.1.75</ecNumber>
    </recommendedName>
    <alternativeName>
        <fullName evidence="1">Dimethylallyl diphosphate:tRNA dimethylallyltransferase</fullName>
        <shortName evidence="1">DMAPP:tRNA dimethylallyltransferase</shortName>
        <shortName evidence="1">DMATase</shortName>
    </alternativeName>
    <alternativeName>
        <fullName evidence="1">Isopentenyl-diphosphate:tRNA isopentenyltransferase</fullName>
        <shortName evidence="1">IPP transferase</shortName>
        <shortName evidence="1">IPPT</shortName>
        <shortName evidence="1">IPTase</shortName>
    </alternativeName>
</protein>
<dbReference type="EC" id="2.5.1.75" evidence="1"/>
<dbReference type="EMBL" id="CP001068">
    <property type="protein sequence ID" value="ACD27960.1"/>
    <property type="molecule type" value="Genomic_DNA"/>
</dbReference>
<dbReference type="SMR" id="B2UBL0"/>
<dbReference type="STRING" id="402626.Rpic_2837"/>
<dbReference type="KEGG" id="rpi:Rpic_2837"/>
<dbReference type="PATRIC" id="fig|402626.5.peg.3974"/>
<dbReference type="eggNOG" id="COG0324">
    <property type="taxonomic scope" value="Bacteria"/>
</dbReference>
<dbReference type="HOGENOM" id="CLU_032616_0_0_4"/>
<dbReference type="GO" id="GO:0005524">
    <property type="term" value="F:ATP binding"/>
    <property type="evidence" value="ECO:0007669"/>
    <property type="project" value="UniProtKB-UniRule"/>
</dbReference>
<dbReference type="GO" id="GO:0052381">
    <property type="term" value="F:tRNA dimethylallyltransferase activity"/>
    <property type="evidence" value="ECO:0007669"/>
    <property type="project" value="UniProtKB-UniRule"/>
</dbReference>
<dbReference type="GO" id="GO:0006400">
    <property type="term" value="P:tRNA modification"/>
    <property type="evidence" value="ECO:0007669"/>
    <property type="project" value="TreeGrafter"/>
</dbReference>
<dbReference type="FunFam" id="1.10.20.140:FF:000001">
    <property type="entry name" value="tRNA dimethylallyltransferase"/>
    <property type="match status" value="1"/>
</dbReference>
<dbReference type="Gene3D" id="1.10.20.140">
    <property type="match status" value="1"/>
</dbReference>
<dbReference type="Gene3D" id="3.40.50.300">
    <property type="entry name" value="P-loop containing nucleotide triphosphate hydrolases"/>
    <property type="match status" value="1"/>
</dbReference>
<dbReference type="HAMAP" id="MF_00185">
    <property type="entry name" value="IPP_trans"/>
    <property type="match status" value="1"/>
</dbReference>
<dbReference type="InterPro" id="IPR039657">
    <property type="entry name" value="Dimethylallyltransferase"/>
</dbReference>
<dbReference type="InterPro" id="IPR018022">
    <property type="entry name" value="IPT"/>
</dbReference>
<dbReference type="InterPro" id="IPR027417">
    <property type="entry name" value="P-loop_NTPase"/>
</dbReference>
<dbReference type="NCBIfam" id="TIGR00174">
    <property type="entry name" value="miaA"/>
    <property type="match status" value="1"/>
</dbReference>
<dbReference type="PANTHER" id="PTHR11088">
    <property type="entry name" value="TRNA DIMETHYLALLYLTRANSFERASE"/>
    <property type="match status" value="1"/>
</dbReference>
<dbReference type="PANTHER" id="PTHR11088:SF60">
    <property type="entry name" value="TRNA DIMETHYLALLYLTRANSFERASE"/>
    <property type="match status" value="1"/>
</dbReference>
<dbReference type="Pfam" id="PF01715">
    <property type="entry name" value="IPPT"/>
    <property type="match status" value="1"/>
</dbReference>
<dbReference type="SUPFAM" id="SSF52540">
    <property type="entry name" value="P-loop containing nucleoside triphosphate hydrolases"/>
    <property type="match status" value="1"/>
</dbReference>
<organism>
    <name type="scientific">Ralstonia pickettii (strain 12J)</name>
    <dbReference type="NCBI Taxonomy" id="402626"/>
    <lineage>
        <taxon>Bacteria</taxon>
        <taxon>Pseudomonadati</taxon>
        <taxon>Pseudomonadota</taxon>
        <taxon>Betaproteobacteria</taxon>
        <taxon>Burkholderiales</taxon>
        <taxon>Burkholderiaceae</taxon>
        <taxon>Ralstonia</taxon>
    </lineage>
</organism>